<feature type="chain" id="PRO_0000204919" description="RANBP2-like and GRIP domain-containing protein 1">
    <location>
        <begin position="1"/>
        <end position="1748"/>
    </location>
</feature>
<feature type="repeat" description="TPR 1">
    <location>
        <begin position="51"/>
        <end position="84"/>
    </location>
</feature>
<feature type="repeat" description="TPR 2">
    <location>
        <begin position="575"/>
        <end position="608"/>
    </location>
</feature>
<feature type="repeat" description="TPR 3">
    <location>
        <begin position="639"/>
        <end position="672"/>
    </location>
</feature>
<feature type="domain" description="RanBD1 1" evidence="2">
    <location>
        <begin position="1021"/>
        <end position="1157"/>
    </location>
</feature>
<feature type="domain" description="RanBD1 2" evidence="2">
    <location>
        <begin position="1318"/>
        <end position="1454"/>
    </location>
</feature>
<feature type="domain" description="GRIP" evidence="3">
    <location>
        <begin position="1685"/>
        <end position="1735"/>
    </location>
</feature>
<feature type="region of interest" description="Disordered" evidence="4">
    <location>
        <begin position="751"/>
        <end position="796"/>
    </location>
</feature>
<feature type="region of interest" description="Disordered" evidence="4">
    <location>
        <begin position="1198"/>
        <end position="1233"/>
    </location>
</feature>
<feature type="region of interest" description="Disordered" evidence="4">
    <location>
        <begin position="1291"/>
        <end position="1316"/>
    </location>
</feature>
<feature type="region of interest" description="Disordered" evidence="4">
    <location>
        <begin position="1565"/>
        <end position="1606"/>
    </location>
</feature>
<feature type="compositionally biased region" description="Low complexity" evidence="4">
    <location>
        <begin position="769"/>
        <end position="788"/>
    </location>
</feature>
<feature type="compositionally biased region" description="Polar residues" evidence="4">
    <location>
        <begin position="1220"/>
        <end position="1229"/>
    </location>
</feature>
<feature type="compositionally biased region" description="Acidic residues" evidence="4">
    <location>
        <begin position="1302"/>
        <end position="1314"/>
    </location>
</feature>
<feature type="compositionally biased region" description="Polar residues" evidence="4">
    <location>
        <begin position="1565"/>
        <end position="1578"/>
    </location>
</feature>
<feature type="compositionally biased region" description="Basic and acidic residues" evidence="4">
    <location>
        <begin position="1579"/>
        <end position="1602"/>
    </location>
</feature>
<feature type="modified residue" description="Phosphothreonine" evidence="1">
    <location>
        <position position="14"/>
    </location>
</feature>
<feature type="sequence conflict" description="In Ref. 1; CAH18184." evidence="5" ref="1">
    <original>A</original>
    <variation>S</variation>
    <location>
        <position position="1212"/>
    </location>
</feature>
<feature type="sequence conflict" description="In Ref. 1; CAH18184." evidence="5" ref="1">
    <original>Q</original>
    <variation>H</variation>
    <location>
        <position position="1596"/>
    </location>
</feature>
<reference key="1">
    <citation type="journal article" date="2007" name="BMC Genomics">
        <title>The full-ORF clone resource of the German cDNA consortium.</title>
        <authorList>
            <person name="Bechtel S."/>
            <person name="Rosenfelder H."/>
            <person name="Duda A."/>
            <person name="Schmidt C.P."/>
            <person name="Ernst U."/>
            <person name="Wellenreuther R."/>
            <person name="Mehrle A."/>
            <person name="Schuster C."/>
            <person name="Bahr A."/>
            <person name="Bloecker H."/>
            <person name="Heubner D."/>
            <person name="Hoerlein A."/>
            <person name="Michel G."/>
            <person name="Wedler H."/>
            <person name="Koehrer K."/>
            <person name="Ottenwaelder B."/>
            <person name="Poustka A."/>
            <person name="Wiemann S."/>
            <person name="Schupp I."/>
        </authorList>
    </citation>
    <scope>NUCLEOTIDE SEQUENCE [LARGE SCALE MRNA]</scope>
    <source>
        <tissue>Testis</tissue>
    </source>
</reference>
<reference key="2">
    <citation type="journal article" date="2005" name="Nature">
        <title>Generation and annotation of the DNA sequences of human chromosomes 2 and 4.</title>
        <authorList>
            <person name="Hillier L.W."/>
            <person name="Graves T.A."/>
            <person name="Fulton R.S."/>
            <person name="Fulton L.A."/>
            <person name="Pepin K.H."/>
            <person name="Minx P."/>
            <person name="Wagner-McPherson C."/>
            <person name="Layman D."/>
            <person name="Wylie K."/>
            <person name="Sekhon M."/>
            <person name="Becker M.C."/>
            <person name="Fewell G.A."/>
            <person name="Delehaunty K.D."/>
            <person name="Miner T.L."/>
            <person name="Nash W.E."/>
            <person name="Kremitzki C."/>
            <person name="Oddy L."/>
            <person name="Du H."/>
            <person name="Sun H."/>
            <person name="Bradshaw-Cordum H."/>
            <person name="Ali J."/>
            <person name="Carter J."/>
            <person name="Cordes M."/>
            <person name="Harris A."/>
            <person name="Isak A."/>
            <person name="van Brunt A."/>
            <person name="Nguyen C."/>
            <person name="Du F."/>
            <person name="Courtney L."/>
            <person name="Kalicki J."/>
            <person name="Ozersky P."/>
            <person name="Abbott S."/>
            <person name="Armstrong J."/>
            <person name="Belter E.A."/>
            <person name="Caruso L."/>
            <person name="Cedroni M."/>
            <person name="Cotton M."/>
            <person name="Davidson T."/>
            <person name="Desai A."/>
            <person name="Elliott G."/>
            <person name="Erb T."/>
            <person name="Fronick C."/>
            <person name="Gaige T."/>
            <person name="Haakenson W."/>
            <person name="Haglund K."/>
            <person name="Holmes A."/>
            <person name="Harkins R."/>
            <person name="Kim K."/>
            <person name="Kruchowski S.S."/>
            <person name="Strong C.M."/>
            <person name="Grewal N."/>
            <person name="Goyea E."/>
            <person name="Hou S."/>
            <person name="Levy A."/>
            <person name="Martinka S."/>
            <person name="Mead K."/>
            <person name="McLellan M.D."/>
            <person name="Meyer R."/>
            <person name="Randall-Maher J."/>
            <person name="Tomlinson C."/>
            <person name="Dauphin-Kohlberg S."/>
            <person name="Kozlowicz-Reilly A."/>
            <person name="Shah N."/>
            <person name="Swearengen-Shahid S."/>
            <person name="Snider J."/>
            <person name="Strong J.T."/>
            <person name="Thompson J."/>
            <person name="Yoakum M."/>
            <person name="Leonard S."/>
            <person name="Pearman C."/>
            <person name="Trani L."/>
            <person name="Radionenko M."/>
            <person name="Waligorski J.E."/>
            <person name="Wang C."/>
            <person name="Rock S.M."/>
            <person name="Tin-Wollam A.-M."/>
            <person name="Maupin R."/>
            <person name="Latreille P."/>
            <person name="Wendl M.C."/>
            <person name="Yang S.-P."/>
            <person name="Pohl C."/>
            <person name="Wallis J.W."/>
            <person name="Spieth J."/>
            <person name="Bieri T.A."/>
            <person name="Berkowicz N."/>
            <person name="Nelson J.O."/>
            <person name="Osborne J."/>
            <person name="Ding L."/>
            <person name="Meyer R."/>
            <person name="Sabo A."/>
            <person name="Shotland Y."/>
            <person name="Sinha P."/>
            <person name="Wohldmann P.E."/>
            <person name="Cook L.L."/>
            <person name="Hickenbotham M.T."/>
            <person name="Eldred J."/>
            <person name="Williams D."/>
            <person name="Jones T.A."/>
            <person name="She X."/>
            <person name="Ciccarelli F.D."/>
            <person name="Izaurralde E."/>
            <person name="Taylor J."/>
            <person name="Schmutz J."/>
            <person name="Myers R.M."/>
            <person name="Cox D.R."/>
            <person name="Huang X."/>
            <person name="McPherson J.D."/>
            <person name="Mardis E.R."/>
            <person name="Clifton S.W."/>
            <person name="Warren W.C."/>
            <person name="Chinwalla A.T."/>
            <person name="Eddy S.R."/>
            <person name="Marra M.A."/>
            <person name="Ovcharenko I."/>
            <person name="Furey T.S."/>
            <person name="Miller W."/>
            <person name="Eichler E.E."/>
            <person name="Bork P."/>
            <person name="Suyama M."/>
            <person name="Torrents D."/>
            <person name="Waterston R.H."/>
            <person name="Wilson R.K."/>
        </authorList>
    </citation>
    <scope>NUCLEOTIDE SEQUENCE [LARGE SCALE GENOMIC DNA]</scope>
</reference>
<keyword id="KW-0597">Phosphoprotein</keyword>
<keyword id="KW-1185">Reference proteome</keyword>
<keyword id="KW-0677">Repeat</keyword>
<keyword id="KW-0802">TPR repeat</keyword>
<sequence>MNVMGFNTDRLAWTRNKLRGFYFAKLYYEAKEYDLAKKYVCTYLSVQERDPRAHRFLGLLYELEENTEKAVECYRRSLELNPPQKDLVLKIAELLCKNDVTDGRAKYWVERAAKLFPGSPAIYKLKEHLLDCEGEDGWNKLFDWIQSELYVRPDDVHMNIRLVELYRSNKRLKDAVARCHEAERNIALRSSLEWNSCVVQTLKEYLESLQCLESDKSDWRATNTDLLLAYANLMLLTLSTRDVQESRELLESFDSALQSAKSSLGGNDELSATFLEMKGHFYMHAGSLLLKMGQHGNNVQWQALSELAALCYVIAFQVPRPKIKLIKGEAGQNLLEMMACDRLSQSGHMLLNLSRGKQDFLKEVVETFANKSGQSVLYNALFSSQSSKDTSFLGSDDIGNIDVQEPELEDLARYDVGAIQAHNGSLQHLTWLGLQWNSLPALPGIRKWLKQLFHHLPQETSRLETNAPESICILDLEVFLLGVVYTSHLQLKEKCNSHHSSYQPLCLPLPVCKRLCTERQKSWWDAVCTLIHRKAVPGNSAELRLVVQHEINTLRAQEKHGLQPALLVHWAKCLQKMGRGLNSSYDQQEYIGRSVHYWKKVLPLLKIIKKNSIPEPIDPLFKHFHSVDIQASEIVEYEEDAHITFAILDAVHGNIEDAVTAFESIKSVVSYWNLALIFHRKAEDIENDAVFPEEQEECKNYLRKTRDYLIKIIDDSDSNLSVVKKLPVPLESVKEMLKSVMQELEDYSEGGPLYKNGSLRNADSEIKHSTPSPTKYSLSPSKSYKYSPKTPPRWAEDQNSLRKMICQEVKAITKLNSSKSASRHRWPTENYGPDSVPDGYQGSQTFHGAPLTVATTGPSVYYSQSPAYNSQYLLRPAANVTPTKGSSNTEFKSTKEGFSIAVSADGFKFGISEPGNQEKKSEKPLENDTGFQAQDISGQKNGRGVIFGQTSSTFTFADVAKSTSGEGFQFGKKDPNFKGFSGAGEKLFSSQCGKMANKANTSGDFEKDDDACKTEDSDDIHFEPVVQMPEKVELVTGEEGEKVLYSQGVKLFRFDAEISQWKERGLGNLKILKNEVNGKPRMLMRRDQVLKVCANHWITTTMNLKPLSGSDRAWMWLASDFSDGDAKLERLAAQFKTPELAEEFKQKFEECQRLLLDIPLQTPHKLVDTGRAAKLIQRAEEMKSGLKDFKTFLTNDQTKVTEEENKGSGTGAAGASDTTIKPNPENTGPTLEWDNYDLREDALDDNVSSSSVHDSPLASSPVRKNIFRFDESTTGFNFSFKSALSLSKSPAKLNQSGTSVGTDEESDVTQEEERDGQYFEPVVPLPDLVEVSSGEENEQVVFSHRAELYRYDKDVGQWKERGIGDIKILQNYDNKQVRIVMRRDQVLKLCANHRITPDMSLQNMKGTERVWVWTACDFADGERKVEHLAVRFKLQDVADSFKKIFDEAKTAQEKDSLITPHVSRSSTPRESPCGKIAVAVLEETTRERTDVIQGDDVADAASEVEVSSTSETTTKAVVSPPKFVFGSESVKRIFSSEKSNPFAFGNSSATGSLFGFSFNAPLKSNDSETSSVAQSGSESKVEPKKCELSKNSDIEQSSDSKVKNLSASFPMEESSINYTFKTPEKEPPLWHAEFTKEELVQKLSSTTKSADQLNGLLRETEATSAVLMEQIKLLKSEIRRLERNQEESAANVEHLKNVLLQFIFLKPGSERESLLPVINTMLQLSPEEKGKLAAVAQGLQETSIPKKK</sequence>
<comment type="miscellaneous">
    <text>One of the 8 copies of RANBP2 clustered close to the chromosome 2 centromere.</text>
</comment>
<evidence type="ECO:0000250" key="1">
    <source>
        <dbReference type="UniProtKB" id="Q99666"/>
    </source>
</evidence>
<evidence type="ECO:0000255" key="2">
    <source>
        <dbReference type="PROSITE-ProRule" id="PRU00164"/>
    </source>
</evidence>
<evidence type="ECO:0000255" key="3">
    <source>
        <dbReference type="PROSITE-ProRule" id="PRU00250"/>
    </source>
</evidence>
<evidence type="ECO:0000256" key="4">
    <source>
        <dbReference type="SAM" id="MobiDB-lite"/>
    </source>
</evidence>
<evidence type="ECO:0000305" key="5"/>
<gene>
    <name type="primary">RGPD1</name>
    <name type="synonym">RANBP2L6</name>
    <name type="synonym">RGP1</name>
</gene>
<name>RGPD1_HUMAN</name>
<organism>
    <name type="scientific">Homo sapiens</name>
    <name type="common">Human</name>
    <dbReference type="NCBI Taxonomy" id="9606"/>
    <lineage>
        <taxon>Eukaryota</taxon>
        <taxon>Metazoa</taxon>
        <taxon>Chordata</taxon>
        <taxon>Craniata</taxon>
        <taxon>Vertebrata</taxon>
        <taxon>Euteleostomi</taxon>
        <taxon>Mammalia</taxon>
        <taxon>Eutheria</taxon>
        <taxon>Euarchontoglires</taxon>
        <taxon>Primates</taxon>
        <taxon>Haplorrhini</taxon>
        <taxon>Catarrhini</taxon>
        <taxon>Hominidae</taxon>
        <taxon>Homo</taxon>
    </lineage>
</organism>
<proteinExistence type="evidence at transcript level"/>
<dbReference type="EMBL" id="CR749330">
    <property type="protein sequence ID" value="CAH18184.1"/>
    <property type="molecule type" value="mRNA"/>
</dbReference>
<dbReference type="EMBL" id="AC111200">
    <property type="status" value="NOT_ANNOTATED_CDS"/>
    <property type="molecule type" value="Genomic_DNA"/>
</dbReference>
<dbReference type="RefSeq" id="NP_001019628.3">
    <property type="nucleotide sequence ID" value="NM_001024457.4"/>
</dbReference>
<dbReference type="SMR" id="P0DJD0"/>
<dbReference type="BioGRID" id="134847">
    <property type="interactions" value="52"/>
</dbReference>
<dbReference type="FunCoup" id="P0DJD0">
    <property type="interactions" value="255"/>
</dbReference>
<dbReference type="IntAct" id="P0DJD0">
    <property type="interactions" value="30"/>
</dbReference>
<dbReference type="STRING" id="9606.ENSP00000453170"/>
<dbReference type="GlyGen" id="P0DJD0">
    <property type="glycosylation" value="2 sites, 1 O-linked glycan (2 sites)"/>
</dbReference>
<dbReference type="iPTMnet" id="P0DJD0"/>
<dbReference type="PhosphoSitePlus" id="P0DJD0"/>
<dbReference type="SwissPalm" id="P0DJD0"/>
<dbReference type="BioMuta" id="RGPD1"/>
<dbReference type="DMDM" id="374253660"/>
<dbReference type="jPOST" id="P0DJD0"/>
<dbReference type="MassIVE" id="P0DJD0"/>
<dbReference type="PaxDb" id="9606-ENSP00000453170"/>
<dbReference type="PeptideAtlas" id="P0DJD0"/>
<dbReference type="Pumba" id="P0DJD0"/>
<dbReference type="Antibodypedia" id="71731">
    <property type="antibodies" value="5 antibodies from 5 providers"/>
</dbReference>
<dbReference type="DNASU" id="400966"/>
<dbReference type="GeneID" id="400966"/>
<dbReference type="KEGG" id="hsa:400966"/>
<dbReference type="UCSC" id="uc021vkh.2">
    <property type="organism name" value="human"/>
</dbReference>
<dbReference type="AGR" id="HGNC:32414"/>
<dbReference type="CTD" id="400966"/>
<dbReference type="DisGeNET" id="400966"/>
<dbReference type="GeneCards" id="RGPD1"/>
<dbReference type="HGNC" id="HGNC:32414">
    <property type="gene designation" value="RGPD1"/>
</dbReference>
<dbReference type="MIM" id="612704">
    <property type="type" value="gene"/>
</dbReference>
<dbReference type="neXtProt" id="NX_P0DJD0"/>
<dbReference type="VEuPathDB" id="HostDB:ENSG00000187627"/>
<dbReference type="eggNOG" id="KOG0864">
    <property type="taxonomic scope" value="Eukaryota"/>
</dbReference>
<dbReference type="InParanoid" id="P0DJD0"/>
<dbReference type="OrthoDB" id="9523654at2759"/>
<dbReference type="PAN-GO" id="P0DJD0">
    <property type="GO annotations" value="4 GO annotations based on evolutionary models"/>
</dbReference>
<dbReference type="PathwayCommons" id="P0DJD0"/>
<dbReference type="SignaLink" id="P0DJD0"/>
<dbReference type="BioGRID-ORCS" id="400966">
    <property type="hits" value="53 hits in 1000 CRISPR screens"/>
</dbReference>
<dbReference type="CD-CODE" id="232F8A39">
    <property type="entry name" value="P-body"/>
</dbReference>
<dbReference type="ChiTaRS" id="RGPD1">
    <property type="organism name" value="human"/>
</dbReference>
<dbReference type="GenomeRNAi" id="400966"/>
<dbReference type="Pharos" id="P0DJD0">
    <property type="development level" value="Tdark"/>
</dbReference>
<dbReference type="PRO" id="PR:P0DJD0"/>
<dbReference type="Proteomes" id="UP000005640">
    <property type="component" value="Chromosome 2"/>
</dbReference>
<dbReference type="RNAct" id="P0DJD0">
    <property type="molecule type" value="protein"/>
</dbReference>
<dbReference type="Bgee" id="ENSG00000187627">
    <property type="expression patterns" value="Expressed in right testis and 103 other cell types or tissues"/>
</dbReference>
<dbReference type="ExpressionAtlas" id="P0DJD0">
    <property type="expression patterns" value="baseline and differential"/>
</dbReference>
<dbReference type="GO" id="GO:0005737">
    <property type="term" value="C:cytoplasm"/>
    <property type="evidence" value="ECO:0000318"/>
    <property type="project" value="GO_Central"/>
</dbReference>
<dbReference type="GO" id="GO:0005643">
    <property type="term" value="C:nuclear pore"/>
    <property type="evidence" value="ECO:0000318"/>
    <property type="project" value="GO_Central"/>
</dbReference>
<dbReference type="GO" id="GO:0006607">
    <property type="term" value="P:NLS-bearing protein import into nucleus"/>
    <property type="evidence" value="ECO:0000318"/>
    <property type="project" value="GO_Central"/>
</dbReference>
<dbReference type="CDD" id="cd13177">
    <property type="entry name" value="RanBD2_RanBP2-like"/>
    <property type="match status" value="1"/>
</dbReference>
<dbReference type="CDD" id="cd14685">
    <property type="entry name" value="RanBD3_RanBP2-like"/>
    <property type="match status" value="1"/>
</dbReference>
<dbReference type="FunFam" id="2.30.29.30:FF:000018">
    <property type="entry name" value="E3 SUMO-protein ligase RanBP2"/>
    <property type="match status" value="2"/>
</dbReference>
<dbReference type="FunFam" id="1.25.40.10:FF:000114">
    <property type="entry name" value="E3 SUMO-protein ligase RanBP2 isoform X1"/>
    <property type="match status" value="1"/>
</dbReference>
<dbReference type="Gene3D" id="2.30.29.30">
    <property type="entry name" value="Pleckstrin-homology domain (PH domain)/Phosphotyrosine-binding domain (PTB)"/>
    <property type="match status" value="2"/>
</dbReference>
<dbReference type="Gene3D" id="1.25.40.10">
    <property type="entry name" value="Tetratricopeptide repeat domain"/>
    <property type="match status" value="1"/>
</dbReference>
<dbReference type="InterPro" id="IPR032023">
    <property type="entry name" value="GCC2_Rab_bind"/>
</dbReference>
<dbReference type="InterPro" id="IPR000237">
    <property type="entry name" value="GRIP_dom"/>
</dbReference>
<dbReference type="InterPro" id="IPR011993">
    <property type="entry name" value="PH-like_dom_sf"/>
</dbReference>
<dbReference type="InterPro" id="IPR000156">
    <property type="entry name" value="Ran_bind_dom"/>
</dbReference>
<dbReference type="InterPro" id="IPR045255">
    <property type="entry name" value="RanBP1-like"/>
</dbReference>
<dbReference type="InterPro" id="IPR011990">
    <property type="entry name" value="TPR-like_helical_dom_sf"/>
</dbReference>
<dbReference type="InterPro" id="IPR013105">
    <property type="entry name" value="TPR_2"/>
</dbReference>
<dbReference type="InterPro" id="IPR019734">
    <property type="entry name" value="TPR_rpt"/>
</dbReference>
<dbReference type="PANTHER" id="PTHR23138">
    <property type="entry name" value="RAN BINDING PROTEIN"/>
    <property type="match status" value="1"/>
</dbReference>
<dbReference type="PANTHER" id="PTHR23138:SF168">
    <property type="entry name" value="RANBP2-LIKE AND GRIP DOMAIN-CONTAINING PROTEIN 1-RELATED"/>
    <property type="match status" value="1"/>
</dbReference>
<dbReference type="Pfam" id="PF01465">
    <property type="entry name" value="GRIP"/>
    <property type="match status" value="1"/>
</dbReference>
<dbReference type="Pfam" id="PF16704">
    <property type="entry name" value="Rab_bind"/>
    <property type="match status" value="1"/>
</dbReference>
<dbReference type="Pfam" id="PF00638">
    <property type="entry name" value="Ran_BP1"/>
    <property type="match status" value="2"/>
</dbReference>
<dbReference type="Pfam" id="PF07719">
    <property type="entry name" value="TPR_2"/>
    <property type="match status" value="1"/>
</dbReference>
<dbReference type="SMART" id="SM00755">
    <property type="entry name" value="Grip"/>
    <property type="match status" value="1"/>
</dbReference>
<dbReference type="SMART" id="SM00160">
    <property type="entry name" value="RanBD"/>
    <property type="match status" value="2"/>
</dbReference>
<dbReference type="SMART" id="SM00028">
    <property type="entry name" value="TPR"/>
    <property type="match status" value="1"/>
</dbReference>
<dbReference type="SUPFAM" id="SSF50729">
    <property type="entry name" value="PH domain-like"/>
    <property type="match status" value="2"/>
</dbReference>
<dbReference type="SUPFAM" id="SSF48452">
    <property type="entry name" value="TPR-like"/>
    <property type="match status" value="1"/>
</dbReference>
<dbReference type="PROSITE" id="PS50913">
    <property type="entry name" value="GRIP"/>
    <property type="match status" value="1"/>
</dbReference>
<dbReference type="PROSITE" id="PS50196">
    <property type="entry name" value="RANBD1"/>
    <property type="match status" value="2"/>
</dbReference>
<dbReference type="PROSITE" id="PS50005">
    <property type="entry name" value="TPR"/>
    <property type="match status" value="1"/>
</dbReference>
<dbReference type="PROSITE" id="PS50293">
    <property type="entry name" value="TPR_REGION"/>
    <property type="match status" value="1"/>
</dbReference>
<protein>
    <recommendedName>
        <fullName>RANBP2-like and GRIP domain-containing protein 1</fullName>
    </recommendedName>
    <alternativeName>
        <fullName>Ran-binding protein 2-like 6</fullName>
        <shortName>RanBP2-like 6</shortName>
        <shortName>RanBP2L6</shortName>
    </alternativeName>
</protein>
<accession>P0DJD0</accession>
<accession>P0C839</accession>
<accession>Q68DN6</accession>
<accession>Q6V1X0</accession>